<proteinExistence type="inferred from homology"/>
<sequence length="418" mass="45642">MSIAEKIRNIAADARQAAIAMAKLSASAKNELLLAMAGSLVRNTVQLIEENRKDLEAGEAKGLSTAMLDRLMLNEARIKAMADGLREVAALSDPVGEVTRMWTRPNGLRVGKMRIPLGVIGIIYEARPNVTADAAALCLKSGNSVILRGGSEAIHSNLAIARILGEELKRAGIPAAALSVVPFPEREGVLEMLKQEEFIDLIIPRGGESLIRFVVENSRIPVIKHYKGVCHVFVDADADFDMAEKIIVNGKVQRPGVCNALETLLVHKDIAETFIPRIAETLIELKVELRGDDCVRQFVPQATKATEDDWHAEYLELILAVRVVDDLDEAVAHINRYGSLHTEAIVTRDYHNAQRFIREVNSSTVLVNASTRFADGNQLGLGAEIGISTTKLHSFGPMGLEDLTTTKFIVYGDGQVRP</sequence>
<evidence type="ECO:0000255" key="1">
    <source>
        <dbReference type="HAMAP-Rule" id="MF_00412"/>
    </source>
</evidence>
<dbReference type="EC" id="1.2.1.41" evidence="1"/>
<dbReference type="EMBL" id="AE017180">
    <property type="protein sequence ID" value="AAR36602.1"/>
    <property type="molecule type" value="Genomic_DNA"/>
</dbReference>
<dbReference type="RefSeq" id="NP_954252.1">
    <property type="nucleotide sequence ID" value="NC_002939.5"/>
</dbReference>
<dbReference type="RefSeq" id="WP_010943829.1">
    <property type="nucleotide sequence ID" value="NC_002939.5"/>
</dbReference>
<dbReference type="SMR" id="Q747Q4"/>
<dbReference type="FunCoup" id="Q747Q4">
    <property type="interactions" value="437"/>
</dbReference>
<dbReference type="STRING" id="243231.GSU3211"/>
<dbReference type="EnsemblBacteria" id="AAR36602">
    <property type="protein sequence ID" value="AAR36602"/>
    <property type="gene ID" value="GSU3211"/>
</dbReference>
<dbReference type="KEGG" id="gsu:GSU3211"/>
<dbReference type="PATRIC" id="fig|243231.5.peg.3235"/>
<dbReference type="eggNOG" id="COG0014">
    <property type="taxonomic scope" value="Bacteria"/>
</dbReference>
<dbReference type="HOGENOM" id="CLU_030231_0_0_7"/>
<dbReference type="InParanoid" id="Q747Q4"/>
<dbReference type="OrthoDB" id="9809970at2"/>
<dbReference type="UniPathway" id="UPA00098">
    <property type="reaction ID" value="UER00360"/>
</dbReference>
<dbReference type="Proteomes" id="UP000000577">
    <property type="component" value="Chromosome"/>
</dbReference>
<dbReference type="GO" id="GO:0005737">
    <property type="term" value="C:cytoplasm"/>
    <property type="evidence" value="ECO:0007669"/>
    <property type="project" value="UniProtKB-SubCell"/>
</dbReference>
<dbReference type="GO" id="GO:0004350">
    <property type="term" value="F:glutamate-5-semialdehyde dehydrogenase activity"/>
    <property type="evidence" value="ECO:0000318"/>
    <property type="project" value="GO_Central"/>
</dbReference>
<dbReference type="GO" id="GO:0050661">
    <property type="term" value="F:NADP binding"/>
    <property type="evidence" value="ECO:0007669"/>
    <property type="project" value="InterPro"/>
</dbReference>
<dbReference type="GO" id="GO:0055129">
    <property type="term" value="P:L-proline biosynthetic process"/>
    <property type="evidence" value="ECO:0007669"/>
    <property type="project" value="UniProtKB-UniRule"/>
</dbReference>
<dbReference type="CDD" id="cd07079">
    <property type="entry name" value="ALDH_F18-19_ProA-GPR"/>
    <property type="match status" value="1"/>
</dbReference>
<dbReference type="FunFam" id="3.40.309.10:FF:000006">
    <property type="entry name" value="Gamma-glutamyl phosphate reductase"/>
    <property type="match status" value="1"/>
</dbReference>
<dbReference type="Gene3D" id="3.40.605.10">
    <property type="entry name" value="Aldehyde Dehydrogenase, Chain A, domain 1"/>
    <property type="match status" value="1"/>
</dbReference>
<dbReference type="Gene3D" id="3.40.309.10">
    <property type="entry name" value="Aldehyde Dehydrogenase, Chain A, domain 2"/>
    <property type="match status" value="1"/>
</dbReference>
<dbReference type="HAMAP" id="MF_00412">
    <property type="entry name" value="ProA"/>
    <property type="match status" value="1"/>
</dbReference>
<dbReference type="InterPro" id="IPR016161">
    <property type="entry name" value="Ald_DH/histidinol_DH"/>
</dbReference>
<dbReference type="InterPro" id="IPR016163">
    <property type="entry name" value="Ald_DH_C"/>
</dbReference>
<dbReference type="InterPro" id="IPR016162">
    <property type="entry name" value="Ald_DH_N"/>
</dbReference>
<dbReference type="InterPro" id="IPR015590">
    <property type="entry name" value="Aldehyde_DH_dom"/>
</dbReference>
<dbReference type="InterPro" id="IPR020593">
    <property type="entry name" value="G-glutamylP_reductase_CS"/>
</dbReference>
<dbReference type="InterPro" id="IPR012134">
    <property type="entry name" value="Glu-5-SA_DH"/>
</dbReference>
<dbReference type="InterPro" id="IPR000965">
    <property type="entry name" value="GPR_dom"/>
</dbReference>
<dbReference type="NCBIfam" id="NF001221">
    <property type="entry name" value="PRK00197.1"/>
    <property type="match status" value="1"/>
</dbReference>
<dbReference type="NCBIfam" id="TIGR00407">
    <property type="entry name" value="proA"/>
    <property type="match status" value="1"/>
</dbReference>
<dbReference type="PANTHER" id="PTHR11063:SF8">
    <property type="entry name" value="DELTA-1-PYRROLINE-5-CARBOXYLATE SYNTHASE"/>
    <property type="match status" value="1"/>
</dbReference>
<dbReference type="PANTHER" id="PTHR11063">
    <property type="entry name" value="GLUTAMATE SEMIALDEHYDE DEHYDROGENASE"/>
    <property type="match status" value="1"/>
</dbReference>
<dbReference type="Pfam" id="PF00171">
    <property type="entry name" value="Aldedh"/>
    <property type="match status" value="1"/>
</dbReference>
<dbReference type="PIRSF" id="PIRSF000151">
    <property type="entry name" value="GPR"/>
    <property type="match status" value="1"/>
</dbReference>
<dbReference type="SUPFAM" id="SSF53720">
    <property type="entry name" value="ALDH-like"/>
    <property type="match status" value="1"/>
</dbReference>
<dbReference type="PROSITE" id="PS01223">
    <property type="entry name" value="PROA"/>
    <property type="match status" value="1"/>
</dbReference>
<feature type="chain" id="PRO_0000189729" description="Gamma-glutamyl phosphate reductase">
    <location>
        <begin position="1"/>
        <end position="418"/>
    </location>
</feature>
<protein>
    <recommendedName>
        <fullName evidence="1">Gamma-glutamyl phosphate reductase</fullName>
        <shortName evidence="1">GPR</shortName>
        <ecNumber evidence="1">1.2.1.41</ecNumber>
    </recommendedName>
    <alternativeName>
        <fullName evidence="1">Glutamate-5-semialdehyde dehydrogenase</fullName>
    </alternativeName>
    <alternativeName>
        <fullName evidence="1">Glutamyl-gamma-semialdehyde dehydrogenase</fullName>
        <shortName evidence="1">GSA dehydrogenase</shortName>
    </alternativeName>
</protein>
<gene>
    <name evidence="1" type="primary">proA</name>
    <name type="ordered locus">GSU3211</name>
</gene>
<organism>
    <name type="scientific">Geobacter sulfurreducens (strain ATCC 51573 / DSM 12127 / PCA)</name>
    <dbReference type="NCBI Taxonomy" id="243231"/>
    <lineage>
        <taxon>Bacteria</taxon>
        <taxon>Pseudomonadati</taxon>
        <taxon>Thermodesulfobacteriota</taxon>
        <taxon>Desulfuromonadia</taxon>
        <taxon>Geobacterales</taxon>
        <taxon>Geobacteraceae</taxon>
        <taxon>Geobacter</taxon>
    </lineage>
</organism>
<accession>Q747Q4</accession>
<comment type="function">
    <text evidence="1">Catalyzes the NADPH-dependent reduction of L-glutamate 5-phosphate into L-glutamate 5-semialdehyde and phosphate. The product spontaneously undergoes cyclization to form 1-pyrroline-5-carboxylate.</text>
</comment>
<comment type="catalytic activity">
    <reaction evidence="1">
        <text>L-glutamate 5-semialdehyde + phosphate + NADP(+) = L-glutamyl 5-phosphate + NADPH + H(+)</text>
        <dbReference type="Rhea" id="RHEA:19541"/>
        <dbReference type="ChEBI" id="CHEBI:15378"/>
        <dbReference type="ChEBI" id="CHEBI:43474"/>
        <dbReference type="ChEBI" id="CHEBI:57783"/>
        <dbReference type="ChEBI" id="CHEBI:58066"/>
        <dbReference type="ChEBI" id="CHEBI:58274"/>
        <dbReference type="ChEBI" id="CHEBI:58349"/>
        <dbReference type="EC" id="1.2.1.41"/>
    </reaction>
</comment>
<comment type="pathway">
    <text evidence="1">Amino-acid biosynthesis; L-proline biosynthesis; L-glutamate 5-semialdehyde from L-glutamate: step 2/2.</text>
</comment>
<comment type="subcellular location">
    <subcellularLocation>
        <location evidence="1">Cytoplasm</location>
    </subcellularLocation>
</comment>
<comment type="similarity">
    <text evidence="1">Belongs to the gamma-glutamyl phosphate reductase family.</text>
</comment>
<keyword id="KW-0028">Amino-acid biosynthesis</keyword>
<keyword id="KW-0963">Cytoplasm</keyword>
<keyword id="KW-0521">NADP</keyword>
<keyword id="KW-0560">Oxidoreductase</keyword>
<keyword id="KW-0641">Proline biosynthesis</keyword>
<keyword id="KW-1185">Reference proteome</keyword>
<name>PROA_GEOSL</name>
<reference key="1">
    <citation type="journal article" date="2003" name="Science">
        <title>Genome of Geobacter sulfurreducens: metal reduction in subsurface environments.</title>
        <authorList>
            <person name="Methe B.A."/>
            <person name="Nelson K.E."/>
            <person name="Eisen J.A."/>
            <person name="Paulsen I.T."/>
            <person name="Nelson W.C."/>
            <person name="Heidelberg J.F."/>
            <person name="Wu D."/>
            <person name="Wu M."/>
            <person name="Ward N.L."/>
            <person name="Beanan M.J."/>
            <person name="Dodson R.J."/>
            <person name="Madupu R."/>
            <person name="Brinkac L.M."/>
            <person name="Daugherty S.C."/>
            <person name="DeBoy R.T."/>
            <person name="Durkin A.S."/>
            <person name="Gwinn M.L."/>
            <person name="Kolonay J.F."/>
            <person name="Sullivan S.A."/>
            <person name="Haft D.H."/>
            <person name="Selengut J."/>
            <person name="Davidsen T.M."/>
            <person name="Zafar N."/>
            <person name="White O."/>
            <person name="Tran B."/>
            <person name="Romero C."/>
            <person name="Forberger H.A."/>
            <person name="Weidman J.F."/>
            <person name="Khouri H.M."/>
            <person name="Feldblyum T.V."/>
            <person name="Utterback T.R."/>
            <person name="Van Aken S.E."/>
            <person name="Lovley D.R."/>
            <person name="Fraser C.M."/>
        </authorList>
    </citation>
    <scope>NUCLEOTIDE SEQUENCE [LARGE SCALE GENOMIC DNA]</scope>
    <source>
        <strain>ATCC 51573 / DSM 12127 / PCA</strain>
    </source>
</reference>